<feature type="chain" id="PRO_0000242061" description="Arginine--tRNA ligase">
    <location>
        <begin position="1"/>
        <end position="577"/>
    </location>
</feature>
<feature type="short sequence motif" description="'HIGH' region">
    <location>
        <begin position="132"/>
        <end position="142"/>
    </location>
</feature>
<keyword id="KW-0030">Aminoacyl-tRNA synthetase</keyword>
<keyword id="KW-0067">ATP-binding</keyword>
<keyword id="KW-0963">Cytoplasm</keyword>
<keyword id="KW-0436">Ligase</keyword>
<keyword id="KW-0547">Nucleotide-binding</keyword>
<keyword id="KW-0648">Protein biosynthesis</keyword>
<keyword id="KW-1185">Reference proteome</keyword>
<proteinExistence type="inferred from homology"/>
<protein>
    <recommendedName>
        <fullName evidence="1">Arginine--tRNA ligase</fullName>
        <ecNumber evidence="1">6.1.1.19</ecNumber>
    </recommendedName>
    <alternativeName>
        <fullName evidence="1">Arginyl-tRNA synthetase</fullName>
        <shortName evidence="1">ArgRS</shortName>
    </alternativeName>
</protein>
<name>SYR_PELUB</name>
<gene>
    <name evidence="1" type="primary">argS</name>
    <name type="ordered locus">SAR11_0970</name>
</gene>
<accession>Q4FM10</accession>
<dbReference type="EC" id="6.1.1.19" evidence="1"/>
<dbReference type="EMBL" id="CP000084">
    <property type="protein sequence ID" value="AAZ21778.1"/>
    <property type="molecule type" value="Genomic_DNA"/>
</dbReference>
<dbReference type="RefSeq" id="WP_011282073.1">
    <property type="nucleotide sequence ID" value="NC_007205.1"/>
</dbReference>
<dbReference type="SMR" id="Q4FM10"/>
<dbReference type="STRING" id="335992.SAR11_0970"/>
<dbReference type="GeneID" id="66295460"/>
<dbReference type="KEGG" id="pub:SAR11_0970"/>
<dbReference type="eggNOG" id="COG0018">
    <property type="taxonomic scope" value="Bacteria"/>
</dbReference>
<dbReference type="HOGENOM" id="CLU_006406_0_1_5"/>
<dbReference type="OrthoDB" id="9803211at2"/>
<dbReference type="Proteomes" id="UP000002528">
    <property type="component" value="Chromosome"/>
</dbReference>
<dbReference type="GO" id="GO:0005737">
    <property type="term" value="C:cytoplasm"/>
    <property type="evidence" value="ECO:0007669"/>
    <property type="project" value="UniProtKB-SubCell"/>
</dbReference>
<dbReference type="GO" id="GO:0004814">
    <property type="term" value="F:arginine-tRNA ligase activity"/>
    <property type="evidence" value="ECO:0007669"/>
    <property type="project" value="UniProtKB-UniRule"/>
</dbReference>
<dbReference type="GO" id="GO:0005524">
    <property type="term" value="F:ATP binding"/>
    <property type="evidence" value="ECO:0007669"/>
    <property type="project" value="UniProtKB-UniRule"/>
</dbReference>
<dbReference type="GO" id="GO:0006420">
    <property type="term" value="P:arginyl-tRNA aminoacylation"/>
    <property type="evidence" value="ECO:0007669"/>
    <property type="project" value="UniProtKB-UniRule"/>
</dbReference>
<dbReference type="CDD" id="cd00671">
    <property type="entry name" value="ArgRS_core"/>
    <property type="match status" value="1"/>
</dbReference>
<dbReference type="Gene3D" id="3.30.1360.70">
    <property type="entry name" value="Arginyl tRNA synthetase N-terminal domain"/>
    <property type="match status" value="1"/>
</dbReference>
<dbReference type="Gene3D" id="3.40.50.620">
    <property type="entry name" value="HUPs"/>
    <property type="match status" value="1"/>
</dbReference>
<dbReference type="Gene3D" id="1.10.730.10">
    <property type="entry name" value="Isoleucyl-tRNA Synthetase, Domain 1"/>
    <property type="match status" value="1"/>
</dbReference>
<dbReference type="HAMAP" id="MF_00123">
    <property type="entry name" value="Arg_tRNA_synth"/>
    <property type="match status" value="1"/>
</dbReference>
<dbReference type="InterPro" id="IPR001412">
    <property type="entry name" value="aa-tRNA-synth_I_CS"/>
</dbReference>
<dbReference type="InterPro" id="IPR001278">
    <property type="entry name" value="Arg-tRNA-ligase"/>
</dbReference>
<dbReference type="InterPro" id="IPR005148">
    <property type="entry name" value="Arg-tRNA-synth_N"/>
</dbReference>
<dbReference type="InterPro" id="IPR036695">
    <property type="entry name" value="Arg-tRNA-synth_N_sf"/>
</dbReference>
<dbReference type="InterPro" id="IPR035684">
    <property type="entry name" value="ArgRS_core"/>
</dbReference>
<dbReference type="InterPro" id="IPR008909">
    <property type="entry name" value="DALR_anticod-bd"/>
</dbReference>
<dbReference type="InterPro" id="IPR014729">
    <property type="entry name" value="Rossmann-like_a/b/a_fold"/>
</dbReference>
<dbReference type="InterPro" id="IPR009080">
    <property type="entry name" value="tRNAsynth_Ia_anticodon-bd"/>
</dbReference>
<dbReference type="NCBIfam" id="TIGR00456">
    <property type="entry name" value="argS"/>
    <property type="match status" value="1"/>
</dbReference>
<dbReference type="PANTHER" id="PTHR11956:SF5">
    <property type="entry name" value="ARGININE--TRNA LIGASE, CYTOPLASMIC"/>
    <property type="match status" value="1"/>
</dbReference>
<dbReference type="PANTHER" id="PTHR11956">
    <property type="entry name" value="ARGINYL-TRNA SYNTHETASE"/>
    <property type="match status" value="1"/>
</dbReference>
<dbReference type="Pfam" id="PF03485">
    <property type="entry name" value="Arg_tRNA_synt_N"/>
    <property type="match status" value="1"/>
</dbReference>
<dbReference type="Pfam" id="PF05746">
    <property type="entry name" value="DALR_1"/>
    <property type="match status" value="1"/>
</dbReference>
<dbReference type="Pfam" id="PF00750">
    <property type="entry name" value="tRNA-synt_1d"/>
    <property type="match status" value="1"/>
</dbReference>
<dbReference type="PRINTS" id="PR01038">
    <property type="entry name" value="TRNASYNTHARG"/>
</dbReference>
<dbReference type="SMART" id="SM01016">
    <property type="entry name" value="Arg_tRNA_synt_N"/>
    <property type="match status" value="1"/>
</dbReference>
<dbReference type="SMART" id="SM00836">
    <property type="entry name" value="DALR_1"/>
    <property type="match status" value="1"/>
</dbReference>
<dbReference type="SUPFAM" id="SSF47323">
    <property type="entry name" value="Anticodon-binding domain of a subclass of class I aminoacyl-tRNA synthetases"/>
    <property type="match status" value="1"/>
</dbReference>
<dbReference type="SUPFAM" id="SSF55190">
    <property type="entry name" value="Arginyl-tRNA synthetase (ArgRS), N-terminal 'additional' domain"/>
    <property type="match status" value="1"/>
</dbReference>
<dbReference type="SUPFAM" id="SSF52374">
    <property type="entry name" value="Nucleotidylyl transferase"/>
    <property type="match status" value="1"/>
</dbReference>
<dbReference type="PROSITE" id="PS00178">
    <property type="entry name" value="AA_TRNA_LIGASE_I"/>
    <property type="match status" value="1"/>
</dbReference>
<evidence type="ECO:0000255" key="1">
    <source>
        <dbReference type="HAMAP-Rule" id="MF_00123"/>
    </source>
</evidence>
<sequence>MNIFDLYLDKIIILIKKLNKDGSLELPESLNGVNVDIPPSNFDCDISTNVAMVLSKANKKSPIDIANILIELIKNEDEKIESISAAKPGFINIKFKTIYWNNFIKSINQNHKDYGVNNKEKKQKYLIEFVSANPTGPLHVGHCRGAILGDVISNILIFNKHDVSKEYYVNDYGNQILNFTKSVFFRIREILFNEKFPIENSDLYPGDYLVGIAKNIIKSNKVLKFDKFENVSKELTLLSVSESLKLIKNNLSNLGIVHDRFTSETDIVLNNEVQKAIDKLKEKKLVYSGKIKAPKGEDDENWVEREQLLFKSTDFGDDKDRALQKSDKSWTYFASDVAYHDNKLNRNYDTLINILGADHAGYIKRITSVVEALSGDKKKLICKVSQLVKLIKDGKPFKMSKRKGDYITVEDLIAEVGKDATRFIMLNRSSDVELDFDFTKVKEKSKDNPLYYVQYCYARISSVFRHVNLNIENDLNIKDYEFAYTGDEIKILKKIAEWPKCIEAASLRLEPHRIPVYLYELSSEFHSYWNMGKEDQSKRFINEQKKISNDKLVFLKVISNVIKSGMDIVGVDTPQKM</sequence>
<organism>
    <name type="scientific">Pelagibacter ubique (strain HTCC1062)</name>
    <dbReference type="NCBI Taxonomy" id="335992"/>
    <lineage>
        <taxon>Bacteria</taxon>
        <taxon>Pseudomonadati</taxon>
        <taxon>Pseudomonadota</taxon>
        <taxon>Alphaproteobacteria</taxon>
        <taxon>Candidatus Pelagibacterales</taxon>
        <taxon>Candidatus Pelagibacteraceae</taxon>
        <taxon>Candidatus Pelagibacter</taxon>
    </lineage>
</organism>
<reference key="1">
    <citation type="journal article" date="2005" name="Science">
        <title>Genome streamlining in a cosmopolitan oceanic bacterium.</title>
        <authorList>
            <person name="Giovannoni S.J."/>
            <person name="Tripp H.J."/>
            <person name="Givan S."/>
            <person name="Podar M."/>
            <person name="Vergin K.L."/>
            <person name="Baptista D."/>
            <person name="Bibbs L."/>
            <person name="Eads J."/>
            <person name="Richardson T.H."/>
            <person name="Noordewier M."/>
            <person name="Rappe M.S."/>
            <person name="Short J.M."/>
            <person name="Carrington J.C."/>
            <person name="Mathur E.J."/>
        </authorList>
    </citation>
    <scope>NUCLEOTIDE SEQUENCE [LARGE SCALE GENOMIC DNA]</scope>
    <source>
        <strain>HTCC1062</strain>
    </source>
</reference>
<comment type="catalytic activity">
    <reaction evidence="1">
        <text>tRNA(Arg) + L-arginine + ATP = L-arginyl-tRNA(Arg) + AMP + diphosphate</text>
        <dbReference type="Rhea" id="RHEA:20301"/>
        <dbReference type="Rhea" id="RHEA-COMP:9658"/>
        <dbReference type="Rhea" id="RHEA-COMP:9673"/>
        <dbReference type="ChEBI" id="CHEBI:30616"/>
        <dbReference type="ChEBI" id="CHEBI:32682"/>
        <dbReference type="ChEBI" id="CHEBI:33019"/>
        <dbReference type="ChEBI" id="CHEBI:78442"/>
        <dbReference type="ChEBI" id="CHEBI:78513"/>
        <dbReference type="ChEBI" id="CHEBI:456215"/>
        <dbReference type="EC" id="6.1.1.19"/>
    </reaction>
</comment>
<comment type="subunit">
    <text evidence="1">Monomer.</text>
</comment>
<comment type="subcellular location">
    <subcellularLocation>
        <location evidence="1">Cytoplasm</location>
    </subcellularLocation>
</comment>
<comment type="similarity">
    <text evidence="1">Belongs to the class-I aminoacyl-tRNA synthetase family.</text>
</comment>